<accession>P65358</accession>
<accession>Q8P1A9</accession>
<organism>
    <name type="scientific">Streptococcus pyogenes serotype M18 (strain MGAS8232)</name>
    <dbReference type="NCBI Taxonomy" id="186103"/>
    <lineage>
        <taxon>Bacteria</taxon>
        <taxon>Bacillati</taxon>
        <taxon>Bacillota</taxon>
        <taxon>Bacilli</taxon>
        <taxon>Lactobacillales</taxon>
        <taxon>Streptococcaceae</taxon>
        <taxon>Streptococcus</taxon>
    </lineage>
</organism>
<name>MIAA_STRP8</name>
<keyword id="KW-0067">ATP-binding</keyword>
<keyword id="KW-0460">Magnesium</keyword>
<keyword id="KW-0547">Nucleotide-binding</keyword>
<keyword id="KW-0808">Transferase</keyword>
<keyword id="KW-0819">tRNA processing</keyword>
<evidence type="ECO:0000255" key="1">
    <source>
        <dbReference type="HAMAP-Rule" id="MF_00185"/>
    </source>
</evidence>
<reference key="1">
    <citation type="journal article" date="2002" name="Proc. Natl. Acad. Sci. U.S.A.">
        <title>Genome sequence and comparative microarray analysis of serotype M18 group A Streptococcus strains associated with acute rheumatic fever outbreaks.</title>
        <authorList>
            <person name="Smoot J.C."/>
            <person name="Barbian K.D."/>
            <person name="Van Gompel J.J."/>
            <person name="Smoot L.M."/>
            <person name="Chaussee M.S."/>
            <person name="Sylva G.L."/>
            <person name="Sturdevant D.E."/>
            <person name="Ricklefs S.M."/>
            <person name="Porcella S.F."/>
            <person name="Parkins L.D."/>
            <person name="Beres S.B."/>
            <person name="Campbell D.S."/>
            <person name="Smith T.M."/>
            <person name="Zhang Q."/>
            <person name="Kapur V."/>
            <person name="Daly J.A."/>
            <person name="Veasy L.G."/>
            <person name="Musser J.M."/>
        </authorList>
    </citation>
    <scope>NUCLEOTIDE SEQUENCE [LARGE SCALE GENOMIC DNA]</scope>
    <source>
        <strain>MGAS8232</strain>
    </source>
</reference>
<feature type="chain" id="PRO_0000163990" description="tRNA dimethylallyltransferase">
    <location>
        <begin position="1"/>
        <end position="299"/>
    </location>
</feature>
<feature type="region of interest" description="Interaction with substrate tRNA" evidence="1">
    <location>
        <begin position="36"/>
        <end position="39"/>
    </location>
</feature>
<feature type="binding site" evidence="1">
    <location>
        <begin position="11"/>
        <end position="18"/>
    </location>
    <ligand>
        <name>ATP</name>
        <dbReference type="ChEBI" id="CHEBI:30616"/>
    </ligand>
</feature>
<feature type="binding site" evidence="1">
    <location>
        <begin position="13"/>
        <end position="18"/>
    </location>
    <ligand>
        <name>substrate</name>
    </ligand>
</feature>
<feature type="site" description="Interaction with substrate tRNA" evidence="1">
    <location>
        <position position="102"/>
    </location>
</feature>
<feature type="site" description="Interaction with substrate tRNA" evidence="1">
    <location>
        <position position="128"/>
    </location>
</feature>
<proteinExistence type="inferred from homology"/>
<gene>
    <name evidence="1" type="primary">miaA</name>
    <name type="ordered locus">spyM18_0978</name>
</gene>
<comment type="function">
    <text evidence="1">Catalyzes the transfer of a dimethylallyl group onto the adenine at position 37 in tRNAs that read codons beginning with uridine, leading to the formation of N6-(dimethylallyl)adenosine (i(6)A).</text>
</comment>
<comment type="catalytic activity">
    <reaction evidence="1">
        <text>adenosine(37) in tRNA + dimethylallyl diphosphate = N(6)-dimethylallyladenosine(37) in tRNA + diphosphate</text>
        <dbReference type="Rhea" id="RHEA:26482"/>
        <dbReference type="Rhea" id="RHEA-COMP:10162"/>
        <dbReference type="Rhea" id="RHEA-COMP:10375"/>
        <dbReference type="ChEBI" id="CHEBI:33019"/>
        <dbReference type="ChEBI" id="CHEBI:57623"/>
        <dbReference type="ChEBI" id="CHEBI:74411"/>
        <dbReference type="ChEBI" id="CHEBI:74415"/>
        <dbReference type="EC" id="2.5.1.75"/>
    </reaction>
</comment>
<comment type="cofactor">
    <cofactor evidence="1">
        <name>Mg(2+)</name>
        <dbReference type="ChEBI" id="CHEBI:18420"/>
    </cofactor>
</comment>
<comment type="subunit">
    <text evidence="1">Monomer.</text>
</comment>
<comment type="similarity">
    <text evidence="1">Belongs to the IPP transferase family.</text>
</comment>
<dbReference type="EC" id="2.5.1.75" evidence="1"/>
<dbReference type="EMBL" id="AE009949">
    <property type="protein sequence ID" value="AAL97618.1"/>
    <property type="molecule type" value="Genomic_DNA"/>
</dbReference>
<dbReference type="RefSeq" id="WP_002984897.1">
    <property type="nucleotide sequence ID" value="NC_003485.1"/>
</dbReference>
<dbReference type="SMR" id="P65358"/>
<dbReference type="GeneID" id="69900977"/>
<dbReference type="KEGG" id="spm:spyM18_0978"/>
<dbReference type="HOGENOM" id="CLU_032616_0_1_9"/>
<dbReference type="GO" id="GO:0005524">
    <property type="term" value="F:ATP binding"/>
    <property type="evidence" value="ECO:0007669"/>
    <property type="project" value="UniProtKB-UniRule"/>
</dbReference>
<dbReference type="GO" id="GO:0052381">
    <property type="term" value="F:tRNA dimethylallyltransferase activity"/>
    <property type="evidence" value="ECO:0007669"/>
    <property type="project" value="UniProtKB-UniRule"/>
</dbReference>
<dbReference type="GO" id="GO:0006400">
    <property type="term" value="P:tRNA modification"/>
    <property type="evidence" value="ECO:0007669"/>
    <property type="project" value="TreeGrafter"/>
</dbReference>
<dbReference type="Gene3D" id="3.40.50.300">
    <property type="entry name" value="P-loop containing nucleotide triphosphate hydrolases"/>
    <property type="match status" value="1"/>
</dbReference>
<dbReference type="HAMAP" id="MF_00185">
    <property type="entry name" value="IPP_trans"/>
    <property type="match status" value="1"/>
</dbReference>
<dbReference type="InterPro" id="IPR039657">
    <property type="entry name" value="Dimethylallyltransferase"/>
</dbReference>
<dbReference type="InterPro" id="IPR018022">
    <property type="entry name" value="IPT"/>
</dbReference>
<dbReference type="InterPro" id="IPR027417">
    <property type="entry name" value="P-loop_NTPase"/>
</dbReference>
<dbReference type="NCBIfam" id="TIGR00174">
    <property type="entry name" value="miaA"/>
    <property type="match status" value="1"/>
</dbReference>
<dbReference type="PANTHER" id="PTHR11088">
    <property type="entry name" value="TRNA DIMETHYLALLYLTRANSFERASE"/>
    <property type="match status" value="1"/>
</dbReference>
<dbReference type="PANTHER" id="PTHR11088:SF60">
    <property type="entry name" value="TRNA DIMETHYLALLYLTRANSFERASE"/>
    <property type="match status" value="1"/>
</dbReference>
<dbReference type="Pfam" id="PF01715">
    <property type="entry name" value="IPPT"/>
    <property type="match status" value="1"/>
</dbReference>
<dbReference type="SUPFAM" id="SSF52540">
    <property type="entry name" value="P-loop containing nucleoside triphosphate hydrolases"/>
    <property type="match status" value="1"/>
</dbReference>
<protein>
    <recommendedName>
        <fullName evidence="1">tRNA dimethylallyltransferase</fullName>
        <ecNumber evidence="1">2.5.1.75</ecNumber>
    </recommendedName>
    <alternativeName>
        <fullName evidence="1">Dimethylallyl diphosphate:tRNA dimethylallyltransferase</fullName>
        <shortName evidence="1">DMAPP:tRNA dimethylallyltransferase</shortName>
        <shortName evidence="1">DMATase</shortName>
    </alternativeName>
    <alternativeName>
        <fullName evidence="1">Isopentenyl-diphosphate:tRNA isopentenyltransferase</fullName>
        <shortName evidence="1">IPP transferase</shortName>
        <shortName evidence="1">IPPT</shortName>
        <shortName evidence="1">IPTase</shortName>
    </alternativeName>
</protein>
<sequence length="299" mass="33993">MTKIKIVVIVGPTAVGKTALGISLAKAFNGEIISGDSQQVYRQLDIGTAKATQEEQEAAVHHLIDIREVTESYSAYDFVQDAQKAISDIVSRGKLPIIVGGTGLYLQSLLEGYHLGGQVDQEAVKAYRNELEQLDDHDLYERLQVNNITIEQVNRRRAIRALELAQFADELENAETAYEPLIIGLNDDRQVIYDRINQRVDRMLENGLLEEAKWLYEHYPTVQASRGIGYKELFPYFVGEMTLAEASDQLKQNTRRFAKRQLTWFRNRMAVSFTAITAPDYPQVVHDRVRDFLGQKEKS</sequence>